<keyword id="KW-0963">Cytoplasm</keyword>
<keyword id="KW-0489">Methyltransferase</keyword>
<keyword id="KW-0949">S-adenosyl-L-methionine</keyword>
<keyword id="KW-0808">Transferase</keyword>
<keyword id="KW-0819">tRNA processing</keyword>
<name>TRMD_LEPBL</name>
<organism>
    <name type="scientific">Leptospira borgpetersenii serovar Hardjo-bovis (strain L550)</name>
    <dbReference type="NCBI Taxonomy" id="355276"/>
    <lineage>
        <taxon>Bacteria</taxon>
        <taxon>Pseudomonadati</taxon>
        <taxon>Spirochaetota</taxon>
        <taxon>Spirochaetia</taxon>
        <taxon>Leptospirales</taxon>
        <taxon>Leptospiraceae</taxon>
        <taxon>Leptospira</taxon>
    </lineage>
</organism>
<comment type="function">
    <text evidence="1">Specifically methylates guanosine-37 in various tRNAs.</text>
</comment>
<comment type="catalytic activity">
    <reaction evidence="1">
        <text>guanosine(37) in tRNA + S-adenosyl-L-methionine = N(1)-methylguanosine(37) in tRNA + S-adenosyl-L-homocysteine + H(+)</text>
        <dbReference type="Rhea" id="RHEA:36899"/>
        <dbReference type="Rhea" id="RHEA-COMP:10145"/>
        <dbReference type="Rhea" id="RHEA-COMP:10147"/>
        <dbReference type="ChEBI" id="CHEBI:15378"/>
        <dbReference type="ChEBI" id="CHEBI:57856"/>
        <dbReference type="ChEBI" id="CHEBI:59789"/>
        <dbReference type="ChEBI" id="CHEBI:73542"/>
        <dbReference type="ChEBI" id="CHEBI:74269"/>
        <dbReference type="EC" id="2.1.1.228"/>
    </reaction>
</comment>
<comment type="subunit">
    <text evidence="1">Homodimer.</text>
</comment>
<comment type="subcellular location">
    <subcellularLocation>
        <location evidence="1">Cytoplasm</location>
    </subcellularLocation>
</comment>
<comment type="similarity">
    <text evidence="1">Belongs to the RNA methyltransferase TrmD family.</text>
</comment>
<protein>
    <recommendedName>
        <fullName evidence="1">tRNA (guanine-N(1)-)-methyltransferase</fullName>
        <ecNumber evidence="1">2.1.1.228</ecNumber>
    </recommendedName>
    <alternativeName>
        <fullName evidence="1">M1G-methyltransferase</fullName>
    </alternativeName>
    <alternativeName>
        <fullName evidence="1">tRNA [GM37] methyltransferase</fullName>
    </alternativeName>
</protein>
<evidence type="ECO:0000255" key="1">
    <source>
        <dbReference type="HAMAP-Rule" id="MF_00605"/>
    </source>
</evidence>
<reference key="1">
    <citation type="journal article" date="2006" name="Proc. Natl. Acad. Sci. U.S.A.">
        <title>Genome reduction in Leptospira borgpetersenii reflects limited transmission potential.</title>
        <authorList>
            <person name="Bulach D.M."/>
            <person name="Zuerner R.L."/>
            <person name="Wilson P."/>
            <person name="Seemann T."/>
            <person name="McGrath A."/>
            <person name="Cullen P.A."/>
            <person name="Davis J."/>
            <person name="Johnson M."/>
            <person name="Kuczek E."/>
            <person name="Alt D.P."/>
            <person name="Peterson-Burch B."/>
            <person name="Coppel R.L."/>
            <person name="Rood J.I."/>
            <person name="Davies J.K."/>
            <person name="Adler B."/>
        </authorList>
    </citation>
    <scope>NUCLEOTIDE SEQUENCE [LARGE SCALE GENOMIC DNA]</scope>
    <source>
        <strain>L550</strain>
    </source>
</reference>
<feature type="chain" id="PRO_1000006492" description="tRNA (guanine-N(1)-)-methyltransferase">
    <location>
        <begin position="1"/>
        <end position="222"/>
    </location>
</feature>
<feature type="binding site" evidence="1">
    <location>
        <position position="111"/>
    </location>
    <ligand>
        <name>S-adenosyl-L-methionine</name>
        <dbReference type="ChEBI" id="CHEBI:59789"/>
    </ligand>
</feature>
<feature type="binding site" evidence="1">
    <location>
        <begin position="131"/>
        <end position="136"/>
    </location>
    <ligand>
        <name>S-adenosyl-L-methionine</name>
        <dbReference type="ChEBI" id="CHEBI:59789"/>
    </ligand>
</feature>
<proteinExistence type="inferred from homology"/>
<gene>
    <name evidence="1" type="primary">trmD</name>
    <name type="ordered locus">LBL_1657</name>
</gene>
<dbReference type="EC" id="2.1.1.228" evidence="1"/>
<dbReference type="EMBL" id="CP000348">
    <property type="protein sequence ID" value="ABJ79107.1"/>
    <property type="molecule type" value="Genomic_DNA"/>
</dbReference>
<dbReference type="RefSeq" id="WP_002751207.1">
    <property type="nucleotide sequence ID" value="NC_008508.1"/>
</dbReference>
<dbReference type="SMR" id="Q050Y8"/>
<dbReference type="KEGG" id="lbl:LBL_1657"/>
<dbReference type="HOGENOM" id="CLU_047363_0_1_12"/>
<dbReference type="GO" id="GO:0005829">
    <property type="term" value="C:cytosol"/>
    <property type="evidence" value="ECO:0007669"/>
    <property type="project" value="TreeGrafter"/>
</dbReference>
<dbReference type="GO" id="GO:0052906">
    <property type="term" value="F:tRNA (guanine(37)-N1)-methyltransferase activity"/>
    <property type="evidence" value="ECO:0007669"/>
    <property type="project" value="UniProtKB-UniRule"/>
</dbReference>
<dbReference type="GO" id="GO:0002939">
    <property type="term" value="P:tRNA N1-guanine methylation"/>
    <property type="evidence" value="ECO:0007669"/>
    <property type="project" value="TreeGrafter"/>
</dbReference>
<dbReference type="CDD" id="cd18080">
    <property type="entry name" value="TrmD-like"/>
    <property type="match status" value="1"/>
</dbReference>
<dbReference type="Gene3D" id="3.40.1280.10">
    <property type="match status" value="1"/>
</dbReference>
<dbReference type="Gene3D" id="1.10.1270.20">
    <property type="entry name" value="tRNA(m1g37)methyltransferase, domain 2"/>
    <property type="match status" value="1"/>
</dbReference>
<dbReference type="HAMAP" id="MF_00605">
    <property type="entry name" value="TrmD"/>
    <property type="match status" value="1"/>
</dbReference>
<dbReference type="InterPro" id="IPR029028">
    <property type="entry name" value="Alpha/beta_knot_MTases"/>
</dbReference>
<dbReference type="InterPro" id="IPR023148">
    <property type="entry name" value="tRNA_m1G_MeTrfase_C_sf"/>
</dbReference>
<dbReference type="InterPro" id="IPR002649">
    <property type="entry name" value="tRNA_m1G_MeTrfase_TrmD"/>
</dbReference>
<dbReference type="InterPro" id="IPR029026">
    <property type="entry name" value="tRNA_m1G_MTases_N"/>
</dbReference>
<dbReference type="InterPro" id="IPR016009">
    <property type="entry name" value="tRNA_MeTrfase_TRMD/TRM10"/>
</dbReference>
<dbReference type="NCBIfam" id="NF000648">
    <property type="entry name" value="PRK00026.1"/>
    <property type="match status" value="1"/>
</dbReference>
<dbReference type="NCBIfam" id="TIGR00088">
    <property type="entry name" value="trmD"/>
    <property type="match status" value="1"/>
</dbReference>
<dbReference type="PANTHER" id="PTHR46417">
    <property type="entry name" value="TRNA (GUANINE-N(1)-)-METHYLTRANSFERASE"/>
    <property type="match status" value="1"/>
</dbReference>
<dbReference type="PANTHER" id="PTHR46417:SF1">
    <property type="entry name" value="TRNA (GUANINE-N(1)-)-METHYLTRANSFERASE"/>
    <property type="match status" value="1"/>
</dbReference>
<dbReference type="Pfam" id="PF01746">
    <property type="entry name" value="tRNA_m1G_MT"/>
    <property type="match status" value="1"/>
</dbReference>
<dbReference type="PIRSF" id="PIRSF000386">
    <property type="entry name" value="tRNA_mtase"/>
    <property type="match status" value="1"/>
</dbReference>
<dbReference type="SUPFAM" id="SSF75217">
    <property type="entry name" value="alpha/beta knot"/>
    <property type="match status" value="1"/>
</dbReference>
<sequence>MKFNFITLFPEKIQSYFSEGLQQKAIESGIFSINTIQLRDFSGNKHNRVDDTIYGGGPGMLLRVEPIHKALLSLGENKGIVILTSPSGIPFHQGIANKLKETGKPLTFISGYYEGVDHRVAEHLVDMEMSLGNYVISAGDLASICIADAVSRLLPGFLGAGESLLDESHNYPDVLEYPQFTKPSEYNGWKVPEVLLSGNHASILAWREQNRKKIDPDQERKL</sequence>
<accession>Q050Y8</accession>